<dbReference type="EMBL" id="CU928164">
    <property type="protein sequence ID" value="CAR19912.1"/>
    <property type="molecule type" value="Genomic_DNA"/>
</dbReference>
<dbReference type="RefSeq" id="WP_000358960.1">
    <property type="nucleotide sequence ID" value="NC_011750.1"/>
</dbReference>
<dbReference type="RefSeq" id="YP_002409695.1">
    <property type="nucleotide sequence ID" value="NC_011750.1"/>
</dbReference>
<dbReference type="SMR" id="B7NLM3"/>
<dbReference type="STRING" id="585057.ECIAI39_3798"/>
<dbReference type="GeneID" id="98390426"/>
<dbReference type="KEGG" id="ect:ECIAI39_3798"/>
<dbReference type="PATRIC" id="fig|585057.6.peg.3935"/>
<dbReference type="HOGENOM" id="CLU_098841_0_1_6"/>
<dbReference type="Proteomes" id="UP000000749">
    <property type="component" value="Chromosome"/>
</dbReference>
<dbReference type="GO" id="GO:0022625">
    <property type="term" value="C:cytosolic large ribosomal subunit"/>
    <property type="evidence" value="ECO:0007669"/>
    <property type="project" value="TreeGrafter"/>
</dbReference>
<dbReference type="GO" id="GO:0008097">
    <property type="term" value="F:5S rRNA binding"/>
    <property type="evidence" value="ECO:0007669"/>
    <property type="project" value="TreeGrafter"/>
</dbReference>
<dbReference type="GO" id="GO:0003735">
    <property type="term" value="F:structural constituent of ribosome"/>
    <property type="evidence" value="ECO:0007669"/>
    <property type="project" value="InterPro"/>
</dbReference>
<dbReference type="GO" id="GO:0006412">
    <property type="term" value="P:translation"/>
    <property type="evidence" value="ECO:0007669"/>
    <property type="project" value="UniProtKB-UniRule"/>
</dbReference>
<dbReference type="CDD" id="cd00432">
    <property type="entry name" value="Ribosomal_L18_L5e"/>
    <property type="match status" value="1"/>
</dbReference>
<dbReference type="FunFam" id="3.30.420.100:FF:000001">
    <property type="entry name" value="50S ribosomal protein L18"/>
    <property type="match status" value="1"/>
</dbReference>
<dbReference type="Gene3D" id="3.30.420.100">
    <property type="match status" value="1"/>
</dbReference>
<dbReference type="HAMAP" id="MF_01337_B">
    <property type="entry name" value="Ribosomal_uL18_B"/>
    <property type="match status" value="1"/>
</dbReference>
<dbReference type="InterPro" id="IPR004389">
    <property type="entry name" value="Ribosomal_uL18_bac-type"/>
</dbReference>
<dbReference type="InterPro" id="IPR005484">
    <property type="entry name" value="Ribosomal_uL18_bac/euk"/>
</dbReference>
<dbReference type="NCBIfam" id="TIGR00060">
    <property type="entry name" value="L18_bact"/>
    <property type="match status" value="1"/>
</dbReference>
<dbReference type="PANTHER" id="PTHR12899">
    <property type="entry name" value="39S RIBOSOMAL PROTEIN L18, MITOCHONDRIAL"/>
    <property type="match status" value="1"/>
</dbReference>
<dbReference type="PANTHER" id="PTHR12899:SF3">
    <property type="entry name" value="LARGE RIBOSOMAL SUBUNIT PROTEIN UL18M"/>
    <property type="match status" value="1"/>
</dbReference>
<dbReference type="Pfam" id="PF00861">
    <property type="entry name" value="Ribosomal_L18p"/>
    <property type="match status" value="1"/>
</dbReference>
<dbReference type="SUPFAM" id="SSF53137">
    <property type="entry name" value="Translational machinery components"/>
    <property type="match status" value="1"/>
</dbReference>
<protein>
    <recommendedName>
        <fullName evidence="1">Large ribosomal subunit protein uL18</fullName>
    </recommendedName>
    <alternativeName>
        <fullName evidence="2">50S ribosomal protein L18</fullName>
    </alternativeName>
</protein>
<reference key="1">
    <citation type="journal article" date="2009" name="PLoS Genet.">
        <title>Organised genome dynamics in the Escherichia coli species results in highly diverse adaptive paths.</title>
        <authorList>
            <person name="Touchon M."/>
            <person name="Hoede C."/>
            <person name="Tenaillon O."/>
            <person name="Barbe V."/>
            <person name="Baeriswyl S."/>
            <person name="Bidet P."/>
            <person name="Bingen E."/>
            <person name="Bonacorsi S."/>
            <person name="Bouchier C."/>
            <person name="Bouvet O."/>
            <person name="Calteau A."/>
            <person name="Chiapello H."/>
            <person name="Clermont O."/>
            <person name="Cruveiller S."/>
            <person name="Danchin A."/>
            <person name="Diard M."/>
            <person name="Dossat C."/>
            <person name="Karoui M.E."/>
            <person name="Frapy E."/>
            <person name="Garry L."/>
            <person name="Ghigo J.M."/>
            <person name="Gilles A.M."/>
            <person name="Johnson J."/>
            <person name="Le Bouguenec C."/>
            <person name="Lescat M."/>
            <person name="Mangenot S."/>
            <person name="Martinez-Jehanne V."/>
            <person name="Matic I."/>
            <person name="Nassif X."/>
            <person name="Oztas S."/>
            <person name="Petit M.A."/>
            <person name="Pichon C."/>
            <person name="Rouy Z."/>
            <person name="Ruf C.S."/>
            <person name="Schneider D."/>
            <person name="Tourret J."/>
            <person name="Vacherie B."/>
            <person name="Vallenet D."/>
            <person name="Medigue C."/>
            <person name="Rocha E.P.C."/>
            <person name="Denamur E."/>
        </authorList>
    </citation>
    <scope>NUCLEOTIDE SEQUENCE [LARGE SCALE GENOMIC DNA]</scope>
    <source>
        <strain>IAI39 / ExPEC</strain>
    </source>
</reference>
<accession>B7NLM3</accession>
<sequence>MDKKSARIRRATRARRKLQELGATRLVVHRTPRHIYAQVIAPNGSEVLVAASTVEKAIAEQLKYTGNKDAAAAVGKAVAERALEKGIKDVSFDRSGFQYHGRVQALADAAREAGLQF</sequence>
<comment type="function">
    <text evidence="1">This is one of the proteins that bind and probably mediate the attachment of the 5S RNA into the large ribosomal subunit, where it forms part of the central protuberance.</text>
</comment>
<comment type="subunit">
    <text evidence="1">Part of the 50S ribosomal subunit; part of the 5S rRNA/L5/L18/L25 subcomplex. Contacts the 5S and 23S rRNAs.</text>
</comment>
<comment type="similarity">
    <text evidence="1">Belongs to the universal ribosomal protein uL18 family.</text>
</comment>
<feature type="chain" id="PRO_1000142658" description="Large ribosomal subunit protein uL18">
    <location>
        <begin position="1"/>
        <end position="117"/>
    </location>
</feature>
<gene>
    <name evidence="1" type="primary">rplR</name>
    <name type="ordered locus">ECIAI39_3798</name>
</gene>
<organism>
    <name type="scientific">Escherichia coli O7:K1 (strain IAI39 / ExPEC)</name>
    <dbReference type="NCBI Taxonomy" id="585057"/>
    <lineage>
        <taxon>Bacteria</taxon>
        <taxon>Pseudomonadati</taxon>
        <taxon>Pseudomonadota</taxon>
        <taxon>Gammaproteobacteria</taxon>
        <taxon>Enterobacterales</taxon>
        <taxon>Enterobacteriaceae</taxon>
        <taxon>Escherichia</taxon>
    </lineage>
</organism>
<keyword id="KW-0687">Ribonucleoprotein</keyword>
<keyword id="KW-0689">Ribosomal protein</keyword>
<keyword id="KW-0694">RNA-binding</keyword>
<keyword id="KW-0699">rRNA-binding</keyword>
<name>RL18_ECO7I</name>
<proteinExistence type="inferred from homology"/>
<evidence type="ECO:0000255" key="1">
    <source>
        <dbReference type="HAMAP-Rule" id="MF_01337"/>
    </source>
</evidence>
<evidence type="ECO:0000305" key="2"/>